<keyword id="KW-1185">Reference proteome</keyword>
<keyword id="KW-0687">Ribonucleoprotein</keyword>
<keyword id="KW-0689">Ribosomal protein</keyword>
<keyword id="KW-0694">RNA-binding</keyword>
<keyword id="KW-0699">rRNA-binding</keyword>
<comment type="function">
    <text evidence="1">Binds to 23S rRNA. Forms part of two intersubunit bridges in the 70S ribosome.</text>
</comment>
<comment type="subunit">
    <text evidence="1">Part of the 50S ribosomal subunit. Forms a cluster with proteins L3 and L19. In the 70S ribosome, L14 and L19 interact and together make contacts with the 16S rRNA in bridges B5 and B8.</text>
</comment>
<comment type="similarity">
    <text evidence="1">Belongs to the universal ribosomal protein uL14 family.</text>
</comment>
<proteinExistence type="inferred from homology"/>
<feature type="chain" id="PRO_1000166899" description="Large ribosomal subunit protein uL14">
    <location>
        <begin position="1"/>
        <end position="122"/>
    </location>
</feature>
<dbReference type="EMBL" id="CP001213">
    <property type="protein sequence ID" value="ACL28674.1"/>
    <property type="molecule type" value="Genomic_DNA"/>
</dbReference>
<dbReference type="RefSeq" id="WP_004268590.1">
    <property type="nucleotide sequence ID" value="NC_011835.1"/>
</dbReference>
<dbReference type="SMR" id="B8DW23"/>
<dbReference type="STRING" id="442563.BLA_0372"/>
<dbReference type="GeneID" id="29695690"/>
<dbReference type="KEGG" id="bla:BLA_0372"/>
<dbReference type="HOGENOM" id="CLU_095071_2_1_11"/>
<dbReference type="Proteomes" id="UP000002456">
    <property type="component" value="Chromosome"/>
</dbReference>
<dbReference type="GO" id="GO:0022625">
    <property type="term" value="C:cytosolic large ribosomal subunit"/>
    <property type="evidence" value="ECO:0007669"/>
    <property type="project" value="TreeGrafter"/>
</dbReference>
<dbReference type="GO" id="GO:0070180">
    <property type="term" value="F:large ribosomal subunit rRNA binding"/>
    <property type="evidence" value="ECO:0007669"/>
    <property type="project" value="TreeGrafter"/>
</dbReference>
<dbReference type="GO" id="GO:0003735">
    <property type="term" value="F:structural constituent of ribosome"/>
    <property type="evidence" value="ECO:0007669"/>
    <property type="project" value="InterPro"/>
</dbReference>
<dbReference type="GO" id="GO:0006412">
    <property type="term" value="P:translation"/>
    <property type="evidence" value="ECO:0007669"/>
    <property type="project" value="UniProtKB-UniRule"/>
</dbReference>
<dbReference type="CDD" id="cd00337">
    <property type="entry name" value="Ribosomal_uL14"/>
    <property type="match status" value="1"/>
</dbReference>
<dbReference type="FunFam" id="2.40.150.20:FF:000001">
    <property type="entry name" value="50S ribosomal protein L14"/>
    <property type="match status" value="1"/>
</dbReference>
<dbReference type="Gene3D" id="2.40.150.20">
    <property type="entry name" value="Ribosomal protein L14"/>
    <property type="match status" value="1"/>
</dbReference>
<dbReference type="HAMAP" id="MF_01367">
    <property type="entry name" value="Ribosomal_uL14"/>
    <property type="match status" value="1"/>
</dbReference>
<dbReference type="InterPro" id="IPR000218">
    <property type="entry name" value="Ribosomal_uL14"/>
</dbReference>
<dbReference type="InterPro" id="IPR005745">
    <property type="entry name" value="Ribosomal_uL14_bac-type"/>
</dbReference>
<dbReference type="InterPro" id="IPR019972">
    <property type="entry name" value="Ribosomal_uL14_CS"/>
</dbReference>
<dbReference type="InterPro" id="IPR036853">
    <property type="entry name" value="Ribosomal_uL14_sf"/>
</dbReference>
<dbReference type="NCBIfam" id="TIGR01067">
    <property type="entry name" value="rplN_bact"/>
    <property type="match status" value="1"/>
</dbReference>
<dbReference type="PANTHER" id="PTHR11761">
    <property type="entry name" value="50S/60S RIBOSOMAL PROTEIN L14/L23"/>
    <property type="match status" value="1"/>
</dbReference>
<dbReference type="PANTHER" id="PTHR11761:SF3">
    <property type="entry name" value="LARGE RIBOSOMAL SUBUNIT PROTEIN UL14M"/>
    <property type="match status" value="1"/>
</dbReference>
<dbReference type="Pfam" id="PF00238">
    <property type="entry name" value="Ribosomal_L14"/>
    <property type="match status" value="1"/>
</dbReference>
<dbReference type="SMART" id="SM01374">
    <property type="entry name" value="Ribosomal_L14"/>
    <property type="match status" value="1"/>
</dbReference>
<dbReference type="SUPFAM" id="SSF50193">
    <property type="entry name" value="Ribosomal protein L14"/>
    <property type="match status" value="1"/>
</dbReference>
<dbReference type="PROSITE" id="PS00049">
    <property type="entry name" value="RIBOSOMAL_L14"/>
    <property type="match status" value="1"/>
</dbReference>
<protein>
    <recommendedName>
        <fullName evidence="1">Large ribosomal subunit protein uL14</fullName>
    </recommendedName>
    <alternativeName>
        <fullName evidence="2">50S ribosomal protein L14</fullName>
    </alternativeName>
</protein>
<sequence length="122" mass="13253">MIQQETRLHVADNTGAKELLAIRVLGGSKRRYAGIGDVIVASVKDAIPGGSVKKGDVVKAVVVRTVKERRRADGSYIKFDENAAVILGSGREPKGTRIFGPVGRELRDKRFMRIVSLAPEVI</sequence>
<gene>
    <name evidence="1" type="primary">rplN</name>
    <name type="ordered locus">BLA_0372</name>
</gene>
<name>RL14_BIFA0</name>
<organism>
    <name type="scientific">Bifidobacterium animalis subsp. lactis (strain AD011)</name>
    <dbReference type="NCBI Taxonomy" id="442563"/>
    <lineage>
        <taxon>Bacteria</taxon>
        <taxon>Bacillati</taxon>
        <taxon>Actinomycetota</taxon>
        <taxon>Actinomycetes</taxon>
        <taxon>Bifidobacteriales</taxon>
        <taxon>Bifidobacteriaceae</taxon>
        <taxon>Bifidobacterium</taxon>
    </lineage>
</organism>
<reference key="1">
    <citation type="journal article" date="2009" name="J. Bacteriol.">
        <title>Genome sequence of the probiotic bacterium Bifidobacterium animalis subsp. lactis AD011.</title>
        <authorList>
            <person name="Kim J.F."/>
            <person name="Jeong H."/>
            <person name="Yu D.S."/>
            <person name="Choi S.-H."/>
            <person name="Hur C.-G."/>
            <person name="Park M.-S."/>
            <person name="Yoon S.H."/>
            <person name="Kim D.-W."/>
            <person name="Ji G.E."/>
            <person name="Park H.-S."/>
            <person name="Oh T.K."/>
        </authorList>
    </citation>
    <scope>NUCLEOTIDE SEQUENCE [LARGE SCALE GENOMIC DNA]</scope>
    <source>
        <strain>AD011</strain>
    </source>
</reference>
<evidence type="ECO:0000255" key="1">
    <source>
        <dbReference type="HAMAP-Rule" id="MF_01367"/>
    </source>
</evidence>
<evidence type="ECO:0000305" key="2"/>
<accession>B8DW23</accession>